<accession>B7ULG5</accession>
<gene>
    <name evidence="1" type="primary">secB</name>
    <name type="ordered locus">E2348C_3858</name>
</gene>
<reference key="1">
    <citation type="journal article" date="2009" name="J. Bacteriol.">
        <title>Complete genome sequence and comparative genome analysis of enteropathogenic Escherichia coli O127:H6 strain E2348/69.</title>
        <authorList>
            <person name="Iguchi A."/>
            <person name="Thomson N.R."/>
            <person name="Ogura Y."/>
            <person name="Saunders D."/>
            <person name="Ooka T."/>
            <person name="Henderson I.R."/>
            <person name="Harris D."/>
            <person name="Asadulghani M."/>
            <person name="Kurokawa K."/>
            <person name="Dean P."/>
            <person name="Kenny B."/>
            <person name="Quail M.A."/>
            <person name="Thurston S."/>
            <person name="Dougan G."/>
            <person name="Hayashi T."/>
            <person name="Parkhill J."/>
            <person name="Frankel G."/>
        </authorList>
    </citation>
    <scope>NUCLEOTIDE SEQUENCE [LARGE SCALE GENOMIC DNA]</scope>
    <source>
        <strain>E2348/69 / EPEC</strain>
    </source>
</reference>
<evidence type="ECO:0000255" key="1">
    <source>
        <dbReference type="HAMAP-Rule" id="MF_00821"/>
    </source>
</evidence>
<name>SECB_ECO27</name>
<sequence>MSEQNNTEMTFQIQRIYTKDISFEAPNAPHVFQKDWQPEVKLDLDTASTQLADDVYEVVLRVTVTASLGEETAFLCEVQQGGIFSIAGIEGTQMAHCLGAYCPNILFPYARECITSMVSRGTFPQLNLAPVNFDALFMNYLQQQAGEGTEEHQDA</sequence>
<feature type="chain" id="PRO_1000148701" description="Protein-export protein SecB">
    <location>
        <begin position="1"/>
        <end position="155"/>
    </location>
</feature>
<protein>
    <recommendedName>
        <fullName evidence="1">Protein-export protein SecB</fullName>
    </recommendedName>
</protein>
<organism>
    <name type="scientific">Escherichia coli O127:H6 (strain E2348/69 / EPEC)</name>
    <dbReference type="NCBI Taxonomy" id="574521"/>
    <lineage>
        <taxon>Bacteria</taxon>
        <taxon>Pseudomonadati</taxon>
        <taxon>Pseudomonadota</taxon>
        <taxon>Gammaproteobacteria</taxon>
        <taxon>Enterobacterales</taxon>
        <taxon>Enterobacteriaceae</taxon>
        <taxon>Escherichia</taxon>
    </lineage>
</organism>
<proteinExistence type="inferred from homology"/>
<keyword id="KW-0143">Chaperone</keyword>
<keyword id="KW-0963">Cytoplasm</keyword>
<keyword id="KW-0653">Protein transport</keyword>
<keyword id="KW-1185">Reference proteome</keyword>
<keyword id="KW-0811">Translocation</keyword>
<keyword id="KW-0813">Transport</keyword>
<comment type="function">
    <text evidence="1">One of the proteins required for the normal export of preproteins out of the cell cytoplasm. It is a molecular chaperone that binds to a subset of precursor proteins, maintaining them in a translocation-competent state. It also specifically binds to its receptor SecA.</text>
</comment>
<comment type="subunit">
    <text evidence="1">Homotetramer, a dimer of dimers. One homotetramer interacts with 1 SecA dimer.</text>
</comment>
<comment type="subcellular location">
    <subcellularLocation>
        <location evidence="1">Cytoplasm</location>
    </subcellularLocation>
</comment>
<comment type="similarity">
    <text evidence="1">Belongs to the SecB family.</text>
</comment>
<dbReference type="EMBL" id="FM180568">
    <property type="protein sequence ID" value="CAS11406.1"/>
    <property type="molecule type" value="Genomic_DNA"/>
</dbReference>
<dbReference type="RefSeq" id="WP_000003382.1">
    <property type="nucleotide sequence ID" value="NC_011601.1"/>
</dbReference>
<dbReference type="SMR" id="B7ULG5"/>
<dbReference type="GeneID" id="89518465"/>
<dbReference type="KEGG" id="ecg:E2348C_3858"/>
<dbReference type="HOGENOM" id="CLU_111574_1_0_6"/>
<dbReference type="Proteomes" id="UP000008205">
    <property type="component" value="Chromosome"/>
</dbReference>
<dbReference type="GO" id="GO:0005737">
    <property type="term" value="C:cytoplasm"/>
    <property type="evidence" value="ECO:0007669"/>
    <property type="project" value="UniProtKB-SubCell"/>
</dbReference>
<dbReference type="GO" id="GO:0051082">
    <property type="term" value="F:unfolded protein binding"/>
    <property type="evidence" value="ECO:0007669"/>
    <property type="project" value="InterPro"/>
</dbReference>
<dbReference type="GO" id="GO:0006457">
    <property type="term" value="P:protein folding"/>
    <property type="evidence" value="ECO:0007669"/>
    <property type="project" value="UniProtKB-UniRule"/>
</dbReference>
<dbReference type="GO" id="GO:0051262">
    <property type="term" value="P:protein tetramerization"/>
    <property type="evidence" value="ECO:0007669"/>
    <property type="project" value="InterPro"/>
</dbReference>
<dbReference type="GO" id="GO:0015031">
    <property type="term" value="P:protein transport"/>
    <property type="evidence" value="ECO:0007669"/>
    <property type="project" value="UniProtKB-UniRule"/>
</dbReference>
<dbReference type="CDD" id="cd00557">
    <property type="entry name" value="Translocase_SecB"/>
    <property type="match status" value="1"/>
</dbReference>
<dbReference type="FunFam" id="3.10.420.10:FF:000001">
    <property type="entry name" value="Protein-export chaperone SecB"/>
    <property type="match status" value="1"/>
</dbReference>
<dbReference type="Gene3D" id="3.10.420.10">
    <property type="entry name" value="SecB-like"/>
    <property type="match status" value="1"/>
</dbReference>
<dbReference type="HAMAP" id="MF_00821">
    <property type="entry name" value="SecB"/>
    <property type="match status" value="1"/>
</dbReference>
<dbReference type="InterPro" id="IPR003708">
    <property type="entry name" value="SecB"/>
</dbReference>
<dbReference type="InterPro" id="IPR035958">
    <property type="entry name" value="SecB-like_sf"/>
</dbReference>
<dbReference type="NCBIfam" id="NF004390">
    <property type="entry name" value="PRK05751.1-1"/>
    <property type="match status" value="1"/>
</dbReference>
<dbReference type="NCBIfam" id="NF004393">
    <property type="entry name" value="PRK05751.1-4"/>
    <property type="match status" value="1"/>
</dbReference>
<dbReference type="NCBIfam" id="TIGR00809">
    <property type="entry name" value="secB"/>
    <property type="match status" value="1"/>
</dbReference>
<dbReference type="PANTHER" id="PTHR36918">
    <property type="match status" value="1"/>
</dbReference>
<dbReference type="PANTHER" id="PTHR36918:SF1">
    <property type="entry name" value="PROTEIN-EXPORT PROTEIN SECB"/>
    <property type="match status" value="1"/>
</dbReference>
<dbReference type="Pfam" id="PF02556">
    <property type="entry name" value="SecB"/>
    <property type="match status" value="1"/>
</dbReference>
<dbReference type="PRINTS" id="PR01594">
    <property type="entry name" value="SECBCHAPRONE"/>
</dbReference>
<dbReference type="SUPFAM" id="SSF54611">
    <property type="entry name" value="SecB-like"/>
    <property type="match status" value="1"/>
</dbReference>